<gene>
    <name evidence="1" type="primary">atpE</name>
    <name type="ordered locus">ABBFA_003370</name>
</gene>
<comment type="function">
    <text evidence="1">F(1)F(0) ATP synthase produces ATP from ADP in the presence of a proton or sodium gradient. F-type ATPases consist of two structural domains, F(1) containing the extramembraneous catalytic core and F(0) containing the membrane proton channel, linked together by a central stalk and a peripheral stalk. During catalysis, ATP synthesis in the catalytic domain of F(1) is coupled via a rotary mechanism of the central stalk subunits to proton translocation.</text>
</comment>
<comment type="function">
    <text evidence="1">Key component of the F(0) channel; it plays a direct role in translocation across the membrane. A homomeric c-ring of between 10-14 subunits forms the central stalk rotor element with the F(1) delta and epsilon subunits.</text>
</comment>
<comment type="subunit">
    <text evidence="1">F-type ATPases have 2 components, F(1) - the catalytic core - and F(0) - the membrane proton channel. F(1) has five subunits: alpha(3), beta(3), gamma(1), delta(1), epsilon(1). F(0) has three main subunits: a(1), b(2) and c(10-14). The alpha and beta chains form an alternating ring which encloses part of the gamma chain. F(1) is attached to F(0) by a central stalk formed by the gamma and epsilon chains, while a peripheral stalk is formed by the delta and b chains.</text>
</comment>
<comment type="subcellular location">
    <subcellularLocation>
        <location evidence="1">Cell inner membrane</location>
        <topology evidence="1">Multi-pass membrane protein</topology>
    </subcellularLocation>
</comment>
<comment type="similarity">
    <text evidence="1">Belongs to the ATPase C chain family.</text>
</comment>
<sequence>MELTLGLVAIASAILIAFGALGTAIGFGLLGGRFLEAVARQPELAPQLQTRMFLIAGLLDAVPMIGVGIGLFFIFANPFVG</sequence>
<keyword id="KW-0066">ATP synthesis</keyword>
<keyword id="KW-0997">Cell inner membrane</keyword>
<keyword id="KW-1003">Cell membrane</keyword>
<keyword id="KW-0138">CF(0)</keyword>
<keyword id="KW-0375">Hydrogen ion transport</keyword>
<keyword id="KW-0406">Ion transport</keyword>
<keyword id="KW-0446">Lipid-binding</keyword>
<keyword id="KW-0472">Membrane</keyword>
<keyword id="KW-0812">Transmembrane</keyword>
<keyword id="KW-1133">Transmembrane helix</keyword>
<keyword id="KW-0813">Transport</keyword>
<accession>B7H299</accession>
<name>ATPL_ACIB3</name>
<protein>
    <recommendedName>
        <fullName evidence="1">ATP synthase subunit c</fullName>
    </recommendedName>
    <alternativeName>
        <fullName evidence="1">ATP synthase F(0) sector subunit c</fullName>
    </alternativeName>
    <alternativeName>
        <fullName evidence="1">F-type ATPase subunit c</fullName>
        <shortName evidence="1">F-ATPase subunit c</shortName>
    </alternativeName>
    <alternativeName>
        <fullName evidence="1">Lipid-binding protein</fullName>
    </alternativeName>
</protein>
<dbReference type="EMBL" id="CP001172">
    <property type="protein sequence ID" value="ACJ57657.1"/>
    <property type="molecule type" value="Genomic_DNA"/>
</dbReference>
<dbReference type="RefSeq" id="WP_000424060.1">
    <property type="nucleotide sequence ID" value="NZ_CP001172.1"/>
</dbReference>
<dbReference type="SMR" id="B7H299"/>
<dbReference type="GeneID" id="97424931"/>
<dbReference type="HOGENOM" id="CLU_148047_1_0_6"/>
<dbReference type="Proteomes" id="UP000006924">
    <property type="component" value="Chromosome"/>
</dbReference>
<dbReference type="GO" id="GO:0005886">
    <property type="term" value="C:plasma membrane"/>
    <property type="evidence" value="ECO:0007669"/>
    <property type="project" value="UniProtKB-SubCell"/>
</dbReference>
<dbReference type="GO" id="GO:0045259">
    <property type="term" value="C:proton-transporting ATP synthase complex"/>
    <property type="evidence" value="ECO:0007669"/>
    <property type="project" value="UniProtKB-KW"/>
</dbReference>
<dbReference type="GO" id="GO:0033177">
    <property type="term" value="C:proton-transporting two-sector ATPase complex, proton-transporting domain"/>
    <property type="evidence" value="ECO:0007669"/>
    <property type="project" value="InterPro"/>
</dbReference>
<dbReference type="GO" id="GO:0008289">
    <property type="term" value="F:lipid binding"/>
    <property type="evidence" value="ECO:0007669"/>
    <property type="project" value="UniProtKB-KW"/>
</dbReference>
<dbReference type="GO" id="GO:0046933">
    <property type="term" value="F:proton-transporting ATP synthase activity, rotational mechanism"/>
    <property type="evidence" value="ECO:0007669"/>
    <property type="project" value="UniProtKB-UniRule"/>
</dbReference>
<dbReference type="CDD" id="cd18185">
    <property type="entry name" value="ATP-synt_Fo_c_ATPE"/>
    <property type="match status" value="1"/>
</dbReference>
<dbReference type="FunFam" id="1.20.20.10:FF:000002">
    <property type="entry name" value="ATP synthase subunit c"/>
    <property type="match status" value="1"/>
</dbReference>
<dbReference type="Gene3D" id="1.20.20.10">
    <property type="entry name" value="F1F0 ATP synthase subunit C"/>
    <property type="match status" value="1"/>
</dbReference>
<dbReference type="HAMAP" id="MF_01396">
    <property type="entry name" value="ATP_synth_c_bact"/>
    <property type="match status" value="1"/>
</dbReference>
<dbReference type="InterPro" id="IPR005953">
    <property type="entry name" value="ATP_synth_csu_bac/chlpt"/>
</dbReference>
<dbReference type="InterPro" id="IPR000454">
    <property type="entry name" value="ATP_synth_F0_csu"/>
</dbReference>
<dbReference type="InterPro" id="IPR020537">
    <property type="entry name" value="ATP_synth_F0_csu_DDCD_BS"/>
</dbReference>
<dbReference type="InterPro" id="IPR038662">
    <property type="entry name" value="ATP_synth_F0_csu_sf"/>
</dbReference>
<dbReference type="InterPro" id="IPR002379">
    <property type="entry name" value="ATPase_proteolipid_c-like_dom"/>
</dbReference>
<dbReference type="InterPro" id="IPR035921">
    <property type="entry name" value="F/V-ATP_Csub_sf"/>
</dbReference>
<dbReference type="NCBIfam" id="TIGR01260">
    <property type="entry name" value="ATP_synt_c"/>
    <property type="match status" value="1"/>
</dbReference>
<dbReference type="NCBIfam" id="NF005363">
    <property type="entry name" value="PRK06876.1"/>
    <property type="match status" value="1"/>
</dbReference>
<dbReference type="Pfam" id="PF00137">
    <property type="entry name" value="ATP-synt_C"/>
    <property type="match status" value="1"/>
</dbReference>
<dbReference type="PRINTS" id="PR00124">
    <property type="entry name" value="ATPASEC"/>
</dbReference>
<dbReference type="SUPFAM" id="SSF81333">
    <property type="entry name" value="F1F0 ATP synthase subunit C"/>
    <property type="match status" value="1"/>
</dbReference>
<dbReference type="PROSITE" id="PS00605">
    <property type="entry name" value="ATPASE_C"/>
    <property type="match status" value="1"/>
</dbReference>
<organism>
    <name type="scientific">Acinetobacter baumannii (strain AB307-0294)</name>
    <dbReference type="NCBI Taxonomy" id="557600"/>
    <lineage>
        <taxon>Bacteria</taxon>
        <taxon>Pseudomonadati</taxon>
        <taxon>Pseudomonadota</taxon>
        <taxon>Gammaproteobacteria</taxon>
        <taxon>Moraxellales</taxon>
        <taxon>Moraxellaceae</taxon>
        <taxon>Acinetobacter</taxon>
        <taxon>Acinetobacter calcoaceticus/baumannii complex</taxon>
    </lineage>
</organism>
<reference key="1">
    <citation type="journal article" date="2008" name="J. Bacteriol.">
        <title>Comparative genome sequence analysis of multidrug-resistant Acinetobacter baumannii.</title>
        <authorList>
            <person name="Adams M.D."/>
            <person name="Goglin K."/>
            <person name="Molyneaux N."/>
            <person name="Hujer K.M."/>
            <person name="Lavender H."/>
            <person name="Jamison J.J."/>
            <person name="MacDonald I.J."/>
            <person name="Martin K.M."/>
            <person name="Russo T."/>
            <person name="Campagnari A.A."/>
            <person name="Hujer A.M."/>
            <person name="Bonomo R.A."/>
            <person name="Gill S.R."/>
        </authorList>
    </citation>
    <scope>NUCLEOTIDE SEQUENCE [LARGE SCALE GENOMIC DNA]</scope>
    <source>
        <strain>AB307-0294</strain>
    </source>
</reference>
<proteinExistence type="inferred from homology"/>
<evidence type="ECO:0000255" key="1">
    <source>
        <dbReference type="HAMAP-Rule" id="MF_01396"/>
    </source>
</evidence>
<feature type="chain" id="PRO_1000184301" description="ATP synthase subunit c">
    <location>
        <begin position="1"/>
        <end position="81"/>
    </location>
</feature>
<feature type="transmembrane region" description="Helical" evidence="1">
    <location>
        <begin position="7"/>
        <end position="27"/>
    </location>
</feature>
<feature type="transmembrane region" description="Helical" evidence="1">
    <location>
        <begin position="55"/>
        <end position="75"/>
    </location>
</feature>
<feature type="site" description="Reversibly protonated during proton transport" evidence="1">
    <location>
        <position position="60"/>
    </location>
</feature>